<keyword id="KW-1185">Reference proteome</keyword>
<gene>
    <name type="ordered locus">RSc0326</name>
    <name type="ORF">RS03293</name>
</gene>
<evidence type="ECO:0000255" key="1">
    <source>
        <dbReference type="HAMAP-Rule" id="MF_00659"/>
    </source>
</evidence>
<feature type="chain" id="PRO_0000209309" description="UPF0250 protein RSc0326">
    <location>
        <begin position="1"/>
        <end position="97"/>
    </location>
</feature>
<comment type="similarity">
    <text evidence="1">Belongs to the UPF0250 family.</text>
</comment>
<accession>Q8Y2K9</accession>
<reference key="1">
    <citation type="journal article" date="2002" name="Nature">
        <title>Genome sequence of the plant pathogen Ralstonia solanacearum.</title>
        <authorList>
            <person name="Salanoubat M."/>
            <person name="Genin S."/>
            <person name="Artiguenave F."/>
            <person name="Gouzy J."/>
            <person name="Mangenot S."/>
            <person name="Arlat M."/>
            <person name="Billault A."/>
            <person name="Brottier P."/>
            <person name="Camus J.-C."/>
            <person name="Cattolico L."/>
            <person name="Chandler M."/>
            <person name="Choisne N."/>
            <person name="Claudel-Renard C."/>
            <person name="Cunnac S."/>
            <person name="Demange N."/>
            <person name="Gaspin C."/>
            <person name="Lavie M."/>
            <person name="Moisan A."/>
            <person name="Robert C."/>
            <person name="Saurin W."/>
            <person name="Schiex T."/>
            <person name="Siguier P."/>
            <person name="Thebault P."/>
            <person name="Whalen M."/>
            <person name="Wincker P."/>
            <person name="Levy M."/>
            <person name="Weissenbach J."/>
            <person name="Boucher C.A."/>
        </authorList>
    </citation>
    <scope>NUCLEOTIDE SEQUENCE [LARGE SCALE GENOMIC DNA]</scope>
    <source>
        <strain>ATCC BAA-1114 / GMI1000</strain>
    </source>
</reference>
<organism>
    <name type="scientific">Ralstonia nicotianae (strain ATCC BAA-1114 / GMI1000)</name>
    <name type="common">Ralstonia solanacearum</name>
    <dbReference type="NCBI Taxonomy" id="267608"/>
    <lineage>
        <taxon>Bacteria</taxon>
        <taxon>Pseudomonadati</taxon>
        <taxon>Pseudomonadota</taxon>
        <taxon>Betaproteobacteria</taxon>
        <taxon>Burkholderiales</taxon>
        <taxon>Burkholderiaceae</taxon>
        <taxon>Ralstonia</taxon>
        <taxon>Ralstonia solanacearum species complex</taxon>
    </lineage>
</organism>
<proteinExistence type="inferred from homology"/>
<name>Y326_RALN1</name>
<sequence>MTDANDTPATPPRESLIEYPSDFPIKVMGKMQDDFAETIVQLVQQFDPEFHTGRMEMRPSSGGNYLGLTVIVRATSREQLDALYRALTAHPMVKVVL</sequence>
<dbReference type="EMBL" id="AL646052">
    <property type="protein sequence ID" value="CAD13854.1"/>
    <property type="molecule type" value="Genomic_DNA"/>
</dbReference>
<dbReference type="RefSeq" id="WP_011000290.1">
    <property type="nucleotide sequence ID" value="NC_003295.1"/>
</dbReference>
<dbReference type="SMR" id="Q8Y2K9"/>
<dbReference type="STRING" id="267608.RSc0326"/>
<dbReference type="EnsemblBacteria" id="CAD13854">
    <property type="protein sequence ID" value="CAD13854"/>
    <property type="gene ID" value="RSc0326"/>
</dbReference>
<dbReference type="KEGG" id="rso:RSc0326"/>
<dbReference type="eggNOG" id="COG2921">
    <property type="taxonomic scope" value="Bacteria"/>
</dbReference>
<dbReference type="HOGENOM" id="CLU_161438_1_2_4"/>
<dbReference type="Proteomes" id="UP000001436">
    <property type="component" value="Chromosome"/>
</dbReference>
<dbReference type="Gene3D" id="3.30.70.260">
    <property type="match status" value="1"/>
</dbReference>
<dbReference type="HAMAP" id="MF_00659">
    <property type="entry name" value="UPF0250"/>
    <property type="match status" value="1"/>
</dbReference>
<dbReference type="InterPro" id="IPR007454">
    <property type="entry name" value="UPF0250_YbeD-like"/>
</dbReference>
<dbReference type="InterPro" id="IPR027471">
    <property type="entry name" value="YbeD-like_sf"/>
</dbReference>
<dbReference type="NCBIfam" id="NF002533">
    <property type="entry name" value="PRK02047.1"/>
    <property type="match status" value="1"/>
</dbReference>
<dbReference type="PANTHER" id="PTHR38036">
    <property type="entry name" value="UPF0250 PROTEIN YBED"/>
    <property type="match status" value="1"/>
</dbReference>
<dbReference type="PANTHER" id="PTHR38036:SF1">
    <property type="entry name" value="UPF0250 PROTEIN YBED"/>
    <property type="match status" value="1"/>
</dbReference>
<dbReference type="Pfam" id="PF04359">
    <property type="entry name" value="DUF493"/>
    <property type="match status" value="1"/>
</dbReference>
<dbReference type="SUPFAM" id="SSF117991">
    <property type="entry name" value="YbeD/HP0495-like"/>
    <property type="match status" value="1"/>
</dbReference>
<protein>
    <recommendedName>
        <fullName evidence="1">UPF0250 protein RSc0326</fullName>
    </recommendedName>
</protein>